<proteinExistence type="inferred from homology"/>
<comment type="catalytic activity">
    <reaction evidence="1">
        <text>(S)-2,3,4,5-tetrahydrodipicolinate + succinyl-CoA + H2O = (S)-2-succinylamino-6-oxoheptanedioate + CoA</text>
        <dbReference type="Rhea" id="RHEA:17325"/>
        <dbReference type="ChEBI" id="CHEBI:15377"/>
        <dbReference type="ChEBI" id="CHEBI:15685"/>
        <dbReference type="ChEBI" id="CHEBI:16845"/>
        <dbReference type="ChEBI" id="CHEBI:57287"/>
        <dbReference type="ChEBI" id="CHEBI:57292"/>
        <dbReference type="EC" id="2.3.1.117"/>
    </reaction>
</comment>
<comment type="pathway">
    <text evidence="1">Amino-acid biosynthesis; L-lysine biosynthesis via DAP pathway; LL-2,6-diaminopimelate from (S)-tetrahydrodipicolinate (succinylase route): step 1/3.</text>
</comment>
<comment type="subunit">
    <text evidence="1">Homotrimer.</text>
</comment>
<comment type="subcellular location">
    <subcellularLocation>
        <location evidence="1">Cytoplasm</location>
    </subcellularLocation>
</comment>
<comment type="similarity">
    <text evidence="1">Belongs to the transferase hexapeptide repeat family.</text>
</comment>
<name>DAPD_HAEDU</name>
<gene>
    <name evidence="1" type="primary">dapD</name>
    <name type="ordered locus">HD_0630</name>
</gene>
<evidence type="ECO:0000255" key="1">
    <source>
        <dbReference type="HAMAP-Rule" id="MF_00811"/>
    </source>
</evidence>
<organism>
    <name type="scientific">Haemophilus ducreyi (strain 35000HP / ATCC 700724)</name>
    <dbReference type="NCBI Taxonomy" id="233412"/>
    <lineage>
        <taxon>Bacteria</taxon>
        <taxon>Pseudomonadati</taxon>
        <taxon>Pseudomonadota</taxon>
        <taxon>Gammaproteobacteria</taxon>
        <taxon>Pasteurellales</taxon>
        <taxon>Pasteurellaceae</taxon>
        <taxon>Haemophilus</taxon>
    </lineage>
</organism>
<sequence>MSLQAVIEAAFERRAEITPKTVDVETRVAIETVIEKLDSGEYRVAEKIGGEWVTHQWLKKAVLLSFRINDNQIIDGAETKYYDKVALKFADYTESRFAEEGFRVVPSATVRKGAYIAKNCVLMPSYVNIGAYVGEGTMVDTWATVGSCAQIGKNVHLSGGVGIGGVLEPLQANPTIIGDNCFIGARSEVVEGVIVEEGCVISMGVFIGQSTRIYDRETGEIHYGRVPAGSVVVSGSLPSKCGKYSLYCAVIVKKVDAKTLGKVGINELLRTIEE</sequence>
<keyword id="KW-0012">Acyltransferase</keyword>
<keyword id="KW-0028">Amino-acid biosynthesis</keyword>
<keyword id="KW-0963">Cytoplasm</keyword>
<keyword id="KW-0220">Diaminopimelate biosynthesis</keyword>
<keyword id="KW-0457">Lysine biosynthesis</keyword>
<keyword id="KW-1185">Reference proteome</keyword>
<keyword id="KW-0677">Repeat</keyword>
<keyword id="KW-0808">Transferase</keyword>
<reference key="1">
    <citation type="submission" date="2003-06" db="EMBL/GenBank/DDBJ databases">
        <title>The complete genome sequence of Haemophilus ducreyi.</title>
        <authorList>
            <person name="Munson R.S. Jr."/>
            <person name="Ray W.C."/>
            <person name="Mahairas G."/>
            <person name="Sabo P."/>
            <person name="Mungur R."/>
            <person name="Johnson L."/>
            <person name="Nguyen D."/>
            <person name="Wang J."/>
            <person name="Forst C."/>
            <person name="Hood L."/>
        </authorList>
    </citation>
    <scope>NUCLEOTIDE SEQUENCE [LARGE SCALE GENOMIC DNA]</scope>
    <source>
        <strain>35000HP / ATCC 700724</strain>
    </source>
</reference>
<feature type="chain" id="PRO_0000196939" description="2,3,4,5-tetrahydropyridine-2,6-dicarboxylate N-succinyltransferase">
    <location>
        <begin position="1"/>
        <end position="274"/>
    </location>
</feature>
<feature type="binding site" evidence="1">
    <location>
        <position position="103"/>
    </location>
    <ligand>
        <name>substrate</name>
    </ligand>
</feature>
<feature type="binding site" evidence="1">
    <location>
        <position position="140"/>
    </location>
    <ligand>
        <name>substrate</name>
    </ligand>
</feature>
<protein>
    <recommendedName>
        <fullName evidence="1">2,3,4,5-tetrahydropyridine-2,6-dicarboxylate N-succinyltransferase</fullName>
        <ecNumber evidence="1">2.3.1.117</ecNumber>
    </recommendedName>
    <alternativeName>
        <fullName evidence="1">Tetrahydrodipicolinate N-succinyltransferase</fullName>
        <shortName evidence="1">THDP succinyltransferase</shortName>
        <shortName evidence="1">THP succinyltransferase</shortName>
        <shortName evidence="1">Tetrahydropicolinate succinylase</shortName>
    </alternativeName>
</protein>
<dbReference type="EC" id="2.3.1.117" evidence="1"/>
<dbReference type="EMBL" id="AE017143">
    <property type="protein sequence ID" value="AAP95556.1"/>
    <property type="molecule type" value="Genomic_DNA"/>
</dbReference>
<dbReference type="SMR" id="Q7VNC4"/>
<dbReference type="STRING" id="233412.HD_0630"/>
<dbReference type="KEGG" id="hdu:HD_0630"/>
<dbReference type="eggNOG" id="COG2171">
    <property type="taxonomic scope" value="Bacteria"/>
</dbReference>
<dbReference type="HOGENOM" id="CLU_050859_0_1_6"/>
<dbReference type="UniPathway" id="UPA00034">
    <property type="reaction ID" value="UER00019"/>
</dbReference>
<dbReference type="Proteomes" id="UP000001022">
    <property type="component" value="Chromosome"/>
</dbReference>
<dbReference type="GO" id="GO:0005737">
    <property type="term" value="C:cytoplasm"/>
    <property type="evidence" value="ECO:0007669"/>
    <property type="project" value="UniProtKB-SubCell"/>
</dbReference>
<dbReference type="GO" id="GO:0008666">
    <property type="term" value="F:2,3,4,5-tetrahydropyridine-2,6-dicarboxylate N-succinyltransferase activity"/>
    <property type="evidence" value="ECO:0007669"/>
    <property type="project" value="UniProtKB-UniRule"/>
</dbReference>
<dbReference type="GO" id="GO:0016779">
    <property type="term" value="F:nucleotidyltransferase activity"/>
    <property type="evidence" value="ECO:0007669"/>
    <property type="project" value="TreeGrafter"/>
</dbReference>
<dbReference type="GO" id="GO:0019877">
    <property type="term" value="P:diaminopimelate biosynthetic process"/>
    <property type="evidence" value="ECO:0007669"/>
    <property type="project" value="UniProtKB-UniRule"/>
</dbReference>
<dbReference type="GO" id="GO:0009089">
    <property type="term" value="P:lysine biosynthetic process via diaminopimelate"/>
    <property type="evidence" value="ECO:0007669"/>
    <property type="project" value="UniProtKB-UniRule"/>
</dbReference>
<dbReference type="CDD" id="cd03350">
    <property type="entry name" value="LbH_THP_succinylT"/>
    <property type="match status" value="1"/>
</dbReference>
<dbReference type="Gene3D" id="2.160.10.10">
    <property type="entry name" value="Hexapeptide repeat proteins"/>
    <property type="match status" value="1"/>
</dbReference>
<dbReference type="Gene3D" id="1.10.166.10">
    <property type="entry name" value="Tetrahydrodipicolinate-N-succinyltransferase, N-terminal domain"/>
    <property type="match status" value="1"/>
</dbReference>
<dbReference type="HAMAP" id="MF_00811">
    <property type="entry name" value="DapD"/>
    <property type="match status" value="1"/>
</dbReference>
<dbReference type="InterPro" id="IPR005664">
    <property type="entry name" value="DapD_Trfase_Hexpep_rpt_fam"/>
</dbReference>
<dbReference type="InterPro" id="IPR001451">
    <property type="entry name" value="Hexapep"/>
</dbReference>
<dbReference type="InterPro" id="IPR018357">
    <property type="entry name" value="Hexapep_transf_CS"/>
</dbReference>
<dbReference type="InterPro" id="IPR023180">
    <property type="entry name" value="THP_succinylTrfase_dom1"/>
</dbReference>
<dbReference type="InterPro" id="IPR037133">
    <property type="entry name" value="THP_succinylTrfase_N_sf"/>
</dbReference>
<dbReference type="InterPro" id="IPR011004">
    <property type="entry name" value="Trimer_LpxA-like_sf"/>
</dbReference>
<dbReference type="NCBIfam" id="TIGR00965">
    <property type="entry name" value="dapD"/>
    <property type="match status" value="1"/>
</dbReference>
<dbReference type="NCBIfam" id="NF008808">
    <property type="entry name" value="PRK11830.1"/>
    <property type="match status" value="1"/>
</dbReference>
<dbReference type="PANTHER" id="PTHR19136:SF52">
    <property type="entry name" value="2,3,4,5-TETRAHYDROPYRIDINE-2,6-DICARBOXYLATE N-SUCCINYLTRANSFERASE"/>
    <property type="match status" value="1"/>
</dbReference>
<dbReference type="PANTHER" id="PTHR19136">
    <property type="entry name" value="MOLYBDENUM COFACTOR GUANYLYLTRANSFERASE"/>
    <property type="match status" value="1"/>
</dbReference>
<dbReference type="Pfam" id="PF14602">
    <property type="entry name" value="Hexapep_2"/>
    <property type="match status" value="1"/>
</dbReference>
<dbReference type="Pfam" id="PF14805">
    <property type="entry name" value="THDPS_N_2"/>
    <property type="match status" value="1"/>
</dbReference>
<dbReference type="SUPFAM" id="SSF51161">
    <property type="entry name" value="Trimeric LpxA-like enzymes"/>
    <property type="match status" value="1"/>
</dbReference>
<dbReference type="PROSITE" id="PS00101">
    <property type="entry name" value="HEXAPEP_TRANSFERASES"/>
    <property type="match status" value="1"/>
</dbReference>
<accession>Q7VNC4</accession>